<accession>Q60528</accession>
<feature type="signal peptide" evidence="3">
    <location>
        <begin position="1"/>
        <end position="25"/>
    </location>
</feature>
<feature type="chain" id="PRO_0000019279" description="Mucin-1">
    <location>
        <begin position="26"/>
        <end position="676"/>
    </location>
</feature>
<feature type="chain" id="PRO_0000317450" description="Mucin-1 subunit alpha" evidence="1">
    <location>
        <begin position="26"/>
        <end position="520"/>
    </location>
</feature>
<feature type="chain" id="PRO_0000317451" description="Mucin-1 subunit beta" evidence="1">
    <location>
        <begin position="521"/>
        <end position="676"/>
    </location>
</feature>
<feature type="topological domain" description="Extracellular" evidence="3">
    <location>
        <begin position="26"/>
        <end position="582"/>
    </location>
</feature>
<feature type="transmembrane region" description="Helical" evidence="3">
    <location>
        <begin position="583"/>
        <end position="603"/>
    </location>
</feature>
<feature type="topological domain" description="Cytoplasmic" evidence="3">
    <location>
        <begin position="604"/>
        <end position="676"/>
    </location>
</feature>
<feature type="repeat" description="1">
    <location>
        <begin position="40"/>
        <end position="59"/>
    </location>
</feature>
<feature type="repeat" description="2">
    <location>
        <begin position="60"/>
        <end position="79"/>
    </location>
</feature>
<feature type="repeat" description="3">
    <location>
        <begin position="80"/>
        <end position="99"/>
    </location>
</feature>
<feature type="repeat" description="4">
    <location>
        <begin position="100"/>
        <end position="119"/>
    </location>
</feature>
<feature type="repeat" description="5">
    <location>
        <begin position="120"/>
        <end position="139"/>
    </location>
</feature>
<feature type="repeat" description="6">
    <location>
        <begin position="140"/>
        <end position="159"/>
    </location>
</feature>
<feature type="repeat" description="7">
    <location>
        <begin position="160"/>
        <end position="179"/>
    </location>
</feature>
<feature type="repeat" description="8">
    <location>
        <begin position="180"/>
        <end position="199"/>
    </location>
</feature>
<feature type="repeat" description="9">
    <location>
        <begin position="200"/>
        <end position="219"/>
    </location>
</feature>
<feature type="repeat" description="10">
    <location>
        <begin position="220"/>
        <end position="239"/>
    </location>
</feature>
<feature type="repeat" description="11">
    <location>
        <begin position="240"/>
        <end position="259"/>
    </location>
</feature>
<feature type="repeat" description="12">
    <location>
        <begin position="260"/>
        <end position="279"/>
    </location>
</feature>
<feature type="repeat" description="13">
    <location>
        <begin position="280"/>
        <end position="299"/>
    </location>
</feature>
<feature type="domain" description="SEA" evidence="4">
    <location>
        <begin position="463"/>
        <end position="570"/>
    </location>
</feature>
<feature type="region of interest" description="Disordered" evidence="5">
    <location>
        <begin position="25"/>
        <end position="387"/>
    </location>
</feature>
<feature type="region of interest" description="13 X approximate tandem repeats of P-V-H-S-G-S-S-A-P-P-T-S-S-A-V-N-S-A-T-T">
    <location>
        <begin position="40"/>
        <end position="314"/>
    </location>
</feature>
<feature type="region of interest" description="Disordered" evidence="5">
    <location>
        <begin position="404"/>
        <end position="434"/>
    </location>
</feature>
<feature type="region of interest" description="Interaction with P53" evidence="1">
    <location>
        <begin position="614"/>
        <end position="650"/>
    </location>
</feature>
<feature type="region of interest" description="Disordered" evidence="5">
    <location>
        <begin position="636"/>
        <end position="659"/>
    </location>
</feature>
<feature type="region of interest" description="Required for interaction with GSK3B" evidence="1">
    <location>
        <begin position="645"/>
        <end position="652"/>
    </location>
</feature>
<feature type="region of interest" description="Required for interaction with beta- and gamma-catenins" evidence="1">
    <location>
        <begin position="655"/>
        <end position="662"/>
    </location>
</feature>
<feature type="short sequence motif" description="Interaction with GRB2" evidence="1">
    <location>
        <begin position="625"/>
        <end position="628"/>
    </location>
</feature>
<feature type="short sequence motif" description="Interaction with SRC and ESR1" evidence="1">
    <location>
        <begin position="651"/>
        <end position="654"/>
    </location>
</feature>
<feature type="short sequence motif" description="Required for interaction with AP1S2" evidence="1">
    <location>
        <begin position="664"/>
        <end position="667"/>
    </location>
</feature>
<feature type="compositionally biased region" description="Polar residues" evidence="5">
    <location>
        <begin position="404"/>
        <end position="420"/>
    </location>
</feature>
<feature type="site" description="Cleavage; by autolysis" evidence="1">
    <location>
        <begin position="520"/>
        <end position="521"/>
    </location>
</feature>
<feature type="modified residue" description="Phosphotyrosine; by PDGFR" evidence="2">
    <location>
        <position position="625"/>
    </location>
</feature>
<feature type="modified residue" description="Phosphotyrosine" evidence="2">
    <location>
        <position position="634"/>
    </location>
</feature>
<feature type="modified residue" description="Phosphotyrosine; by PDGFR" evidence="2">
    <location>
        <position position="640"/>
    </location>
</feature>
<feature type="modified residue" description="Phosphothreonine; by PKC/PRKCD" evidence="2">
    <location>
        <position position="646"/>
    </location>
</feature>
<feature type="modified residue" description="Phosphoserine; by GSK3-beta" evidence="2">
    <location>
        <position position="649"/>
    </location>
</feature>
<feature type="modified residue" description="Phosphotyrosine; by CSK, EGFR and SRC" evidence="2">
    <location>
        <position position="651"/>
    </location>
</feature>
<feature type="modified residue" description="Phosphotyrosine" evidence="2">
    <location>
        <position position="664"/>
    </location>
</feature>
<feature type="lipid moiety-binding region" description="S-palmitoyl cysteine" evidence="1">
    <location>
        <position position="606"/>
    </location>
</feature>
<feature type="lipid moiety-binding region" description="S-palmitoyl cysteine" evidence="1">
    <location>
        <position position="608"/>
    </location>
</feature>
<feature type="glycosylation site" description="O-linked (GalNAc...) serine" evidence="3">
    <location>
        <position position="43"/>
    </location>
</feature>
<feature type="glycosylation site" description="O-linked (GalNAc...) serine" evidence="3">
    <location>
        <position position="45"/>
    </location>
</feature>
<feature type="glycosylation site" description="O-linked (GalNAc...) serine" evidence="3">
    <location>
        <position position="46"/>
    </location>
</feature>
<feature type="glycosylation site" description="O-linked (GalNAc...) threonine" evidence="3">
    <location>
        <position position="50"/>
    </location>
</feature>
<feature type="glycosylation site" description="O-linked (GalNAc...) serine" evidence="3">
    <location>
        <position position="51"/>
    </location>
</feature>
<feature type="glycosylation site" description="O-linked (GalNAc...) serine" evidence="3">
    <location>
        <position position="52"/>
    </location>
</feature>
<feature type="glycosylation site" description="O-linked (GalNAc...) serine" evidence="3">
    <location>
        <position position="56"/>
    </location>
</feature>
<feature type="glycosylation site" description="O-linked (GalNAc...) threonine" evidence="3">
    <location>
        <position position="58"/>
    </location>
</feature>
<feature type="glycosylation site" description="O-linked (GalNAc...) threonine" evidence="3">
    <location>
        <position position="59"/>
    </location>
</feature>
<feature type="glycosylation site" description="N-linked (GlcNAc...) asparagine" evidence="3">
    <location>
        <position position="291"/>
    </location>
</feature>
<feature type="glycosylation site" description="N-linked (GlcNAc...) asparagine" evidence="3">
    <location>
        <position position="323"/>
    </location>
</feature>
<feature type="glycosylation site" description="N-linked (GlcNAc...) asparagine" evidence="3">
    <location>
        <position position="350"/>
    </location>
</feature>
<feature type="glycosylation site" description="N-linked (GlcNAc...) asparagine" evidence="3">
    <location>
        <position position="380"/>
    </location>
</feature>
<feature type="glycosylation site" description="N-linked (GlcNAc...) asparagine" evidence="3">
    <location>
        <position position="400"/>
    </location>
</feature>
<feature type="glycosylation site" description="N-linked (GlcNAc...) asparagine" evidence="3">
    <location>
        <position position="413"/>
    </location>
</feature>
<feature type="glycosylation site" description="N-linked (GlcNAc...) asparagine" evidence="3">
    <location>
        <position position="435"/>
    </location>
</feature>
<feature type="glycosylation site" description="N-linked (GlcNAc...) asparagine" evidence="3">
    <location>
        <position position="479"/>
    </location>
</feature>
<feature type="glycosylation site" description="N-linked (GlcNAc...) asparagine" evidence="3">
    <location>
        <position position="496"/>
    </location>
</feature>
<feature type="glycosylation site" description="N-linked (GlcNAc...) asparagine" evidence="3">
    <location>
        <position position="536"/>
    </location>
</feature>
<reference key="1">
    <citation type="journal article" date="1996" name="Am. J. Respir. Cell Mol. Biol.">
        <title>Expression of MUC1 mucin gene by hamster tracheal surface epithelial cells in primary culture.</title>
        <authorList>
            <person name="Park H."/>
            <person name="Hyun S.W."/>
            <person name="Kim K.C."/>
        </authorList>
    </citation>
    <scope>NUCLEOTIDE SEQUENCE [MRNA]</scope>
    <scope>TISSUE SPECIFICITY</scope>
    <source>
        <tissue>Tracheal epithelium</tissue>
    </source>
</reference>
<protein>
    <recommendedName>
        <fullName>Mucin-1</fullName>
        <shortName>MUC-1</shortName>
    </recommendedName>
    <cdAntigenName>CD227</cdAntigenName>
    <component>
        <recommendedName>
            <fullName>Mucin-1 subunit alpha</fullName>
            <shortName>MUC1-NT</shortName>
            <shortName>MUC1-alpha</shortName>
        </recommendedName>
    </component>
    <component>
        <recommendedName>
            <fullName>Mucin-1 subunit beta</fullName>
            <shortName>MUC1-beta</shortName>
        </recommendedName>
        <alternativeName>
            <fullName>MUC1-CT</fullName>
        </alternativeName>
    </component>
</protein>
<gene>
    <name type="primary">MUC1</name>
</gene>
<comment type="function">
    <text evidence="1">The alpha subunit has cell adhesive properties. Can act both as an adhesion and an anti-adhesion protein. May provide a protective layer on epithelial cells against bacterial and enzyme attack (By similarity).</text>
</comment>
<comment type="function">
    <text evidence="1">The beta subunit contains a C-terminal domain which is involved in cell signaling, through phosphorylations and protein-protein interactions. Modulates signaling in ERK, Src and NF-kappaB pathways. In activated T-cells, influences directly or indirectly the Ras/MAPK pathway. Promotes tumor progression. Regulates P53-mediated transcription and determines cell fate in the genotoxic stress response. Binds, together with KLF4, the PE21 promoter element of P53 and represses P53 activity (By similarity).</text>
</comment>
<comment type="subunit">
    <text evidence="1">The alpha subunit forms a tight, non-covalent heterodimeric complex with the proteolytically-released beta-subunit. Binds directly the SH2 domain of GRB2, and forms a MUC1/GRB2/SOS1 complex involved in RAS signaling. The cytoplasmic tail (MUC1CT) interacts with several proteins such as SRC, CTNNB1 and ERBs. Interaction with the SH2 domain of CSK decreases interaction with GSK3B. Interacts with CTNNB1/beta-catenin and JUP/gamma-catenin and promotes cell adhesion. Interaction with JUP/gamma-catenin is induced by heregulin. Binds PRKCD, ERBB2, ERBB3 and ERBB4. Heregulin (HRG) stimulates the interaction with ERBB2 and, to a much lesser extent, the interaction with ERBB3 and ERBB4. Interacts with P53 in response to DNA damage. Interacts with KLF4. Interacts with estrogen receptor alpha/ESR1, through its DNA-binding domain, and stimulates its transcription activity. Binds ADAM17 (By similarity).</text>
</comment>
<comment type="subcellular location">
    <subcellularLocation>
        <location>Apical cell membrane</location>
        <topology>Single-pass type I membrane protein</topology>
    </subcellularLocation>
    <text evidence="1">Exclusively located in the apical domain of the plasma membrane of highly polarized epithelial cells. After endocytosis, internalized and recycled to the cell membrane. Located to microvilli and to the tips of long filopodial protusions (By similarity).</text>
</comment>
<comment type="subcellular location">
    <molecule>Mucin-1 subunit beta</molecule>
    <subcellularLocation>
        <location>Cell membrane</location>
    </subcellularLocation>
    <subcellularLocation>
        <location>Cytoplasm</location>
    </subcellularLocation>
    <subcellularLocation>
        <location>Nucleus</location>
    </subcellularLocation>
    <text>On EGF and PDGFRB stimulation, transported to the nucleus through interaction with CTNNB1, a process which is stimulated by phosphorylation. On HRG stimulation, colocalizes with JUP/gamma-catenin at the nucleus.</text>
</comment>
<comment type="PTM">
    <text>Probably both N- and O-glycosylated (in repeat region).</text>
</comment>
<comment type="PTM">
    <text evidence="1">Proteolytic cleavage in the SEA domain occurs in the endoplasmic reticulum by an autoproteolytic mechanism and requires the full-length SEA domain as well as requiring a Ser, Thr or Cys residue at the P + 1 site. Ectodomain shedding is mediated by ADAM17 in uterine epithelial cells (By similarity).</text>
</comment>
<comment type="PTM">
    <text evidence="1">Dual palmitoylation on cysteine residues in the CQC motif is required for recycling from endosomes back to the plasma membrane.</text>
</comment>
<comment type="PTM">
    <text evidence="1">Phosphorylated on tyrosines and serine residues in the C-terminal. Phosphorylation on tyrosines in the C-terminal increases the nuclear location of MUC1 and beta-catenin. Phosphorylation by PKC delta induces binding of MUC1 to beta-catenin/CTNNB1 and thus decreases the formation of the beta-catenin/E-cadherin complex. Src-mediated phosphorylation inhibits interaction with GSK3B. Csk- or Src- or EGFR-mediated phosphorylation on Tyr-651 increases binding to beta-catenin/CTNNB1. GSK3B-mediated phosphorylation on Ser-649 decreases this interaction but restores the formation of the beta-cadherin/E-cadherin complex. On T-cell receptor activation, phosphorylated by LCK. PDGFR-mediated phosphorylation increases nuclear colocalization of MUC1CT and CTNNB1 (By similarity).</text>
</comment>
<comment type="caution">
    <text evidence="6">O-glycosylation sites are annotated in first sequence repeat only. Residues at similar position are probably glycosylated in all repeats.</text>
</comment>
<organism>
    <name type="scientific">Mesocricetus auratus</name>
    <name type="common">Golden hamster</name>
    <dbReference type="NCBI Taxonomy" id="10036"/>
    <lineage>
        <taxon>Eukaryota</taxon>
        <taxon>Metazoa</taxon>
        <taxon>Chordata</taxon>
        <taxon>Craniata</taxon>
        <taxon>Vertebrata</taxon>
        <taxon>Euteleostomi</taxon>
        <taxon>Mammalia</taxon>
        <taxon>Eutheria</taxon>
        <taxon>Euarchontoglires</taxon>
        <taxon>Glires</taxon>
        <taxon>Rodentia</taxon>
        <taxon>Myomorpha</taxon>
        <taxon>Muroidea</taxon>
        <taxon>Cricetidae</taxon>
        <taxon>Cricetinae</taxon>
        <taxon>Mesocricetus</taxon>
    </lineage>
</organism>
<dbReference type="EMBL" id="U36918">
    <property type="protein sequence ID" value="AAB53965.1"/>
    <property type="molecule type" value="mRNA"/>
</dbReference>
<dbReference type="RefSeq" id="NP_001268584.1">
    <property type="nucleotide sequence ID" value="NM_001281655.1"/>
</dbReference>
<dbReference type="STRING" id="10036.ENSMAUP00000014996"/>
<dbReference type="GlyCosmos" id="Q60528">
    <property type="glycosylation" value="19 sites, No reported glycans"/>
</dbReference>
<dbReference type="eggNOG" id="ENOG502S4SC">
    <property type="taxonomic scope" value="Eukaryota"/>
</dbReference>
<dbReference type="Proteomes" id="UP000189706">
    <property type="component" value="Unplaced"/>
</dbReference>
<dbReference type="GO" id="GO:0016324">
    <property type="term" value="C:apical plasma membrane"/>
    <property type="evidence" value="ECO:0007669"/>
    <property type="project" value="UniProtKB-SubCell"/>
</dbReference>
<dbReference type="GO" id="GO:0005737">
    <property type="term" value="C:cytoplasm"/>
    <property type="evidence" value="ECO:0007669"/>
    <property type="project" value="UniProtKB-SubCell"/>
</dbReference>
<dbReference type="GO" id="GO:0005634">
    <property type="term" value="C:nucleus"/>
    <property type="evidence" value="ECO:0007669"/>
    <property type="project" value="UniProtKB-SubCell"/>
</dbReference>
<dbReference type="Gene3D" id="6.10.140.600">
    <property type="match status" value="1"/>
</dbReference>
<dbReference type="InterPro" id="IPR000082">
    <property type="entry name" value="SEA_dom"/>
</dbReference>
<dbReference type="InterPro" id="IPR036364">
    <property type="entry name" value="SEA_dom_sf"/>
</dbReference>
<dbReference type="PANTHER" id="PTHR10006:SF19">
    <property type="entry name" value="MUCIN-1"/>
    <property type="match status" value="1"/>
</dbReference>
<dbReference type="PANTHER" id="PTHR10006">
    <property type="entry name" value="MUCIN-1-RELATED"/>
    <property type="match status" value="1"/>
</dbReference>
<dbReference type="Pfam" id="PF01390">
    <property type="entry name" value="SEA"/>
    <property type="match status" value="1"/>
</dbReference>
<dbReference type="SMART" id="SM00200">
    <property type="entry name" value="SEA"/>
    <property type="match status" value="1"/>
</dbReference>
<dbReference type="SUPFAM" id="SSF82671">
    <property type="entry name" value="SEA domain"/>
    <property type="match status" value="1"/>
</dbReference>
<dbReference type="PROSITE" id="PS50024">
    <property type="entry name" value="SEA"/>
    <property type="match status" value="1"/>
</dbReference>
<proteinExistence type="evidence at transcript level"/>
<sequence>MTPGIRAPFLLTLLLALVTDPNSVALSQDTSSSSTLNTTPVHSGSSAPATSSAVDSATTPGHSGSSAPPTSSAVNSATTPGHSGSSAPPTSSAVNSATTPVHSGSSAPVTSSAVNSATTPVHSGSSAPPTSSAVNSATTPVHSGSSAPVTSSAVNSATTPVHSGSSAPVTSSAVDSATTPVHSGSSAPPTSSAVNSATTPVHSGSSAPVTSSAVNSATTPVHSGSSAPVTSSAVNSATTPVHSGSSAPPTSSVVNSATTPVHSGSSAPPTSSAVNLATTPVHSGSSTPATNSTTDSATTPVPPGSSMQTTEAISGSANTPIHNGSLVPTTSSALVPTTSAAHSGASAMTNSSESDLATTPIDSGTSISTTKAPATTPVHNGSLVPTTSSVLGSATTLIHNDTSTMATTTPVGNGTQSSVPSRHPVTPTPPAVSSNSTIALSTYYSTALSPAFSSHAAPQVSVGVSFFLLSFHIWNHQFNSSLEDPSSNYYQELKRNVSGLFLQVFSRAFLGISTIEFRSGSVVVDSTVIFREGAVNASEVKSQLLQHEQEAEEYNLAISKINVGEMQFPSSAQSWPGVPGWGIALLVLVCILVALAIVYLIALAVCQCRRKNYGQLDIFPIQDSYHPMSEYPTYHTHGRYVPPGSTKRSPYEEVSAGNGSSLSYTNPVVATTSANL</sequence>
<keyword id="KW-0068">Autocatalytic cleavage</keyword>
<keyword id="KW-1003">Cell membrane</keyword>
<keyword id="KW-0963">Cytoplasm</keyword>
<keyword id="KW-0325">Glycoprotein</keyword>
<keyword id="KW-0449">Lipoprotein</keyword>
<keyword id="KW-0472">Membrane</keyword>
<keyword id="KW-0539">Nucleus</keyword>
<keyword id="KW-0564">Palmitate</keyword>
<keyword id="KW-0597">Phosphoprotein</keyword>
<keyword id="KW-1185">Reference proteome</keyword>
<keyword id="KW-0677">Repeat</keyword>
<keyword id="KW-0732">Signal</keyword>
<keyword id="KW-0812">Transmembrane</keyword>
<keyword id="KW-1133">Transmembrane helix</keyword>
<name>MUC1_MESAU</name>
<evidence type="ECO:0000250" key="1"/>
<evidence type="ECO:0000250" key="2">
    <source>
        <dbReference type="UniProtKB" id="P15941"/>
    </source>
</evidence>
<evidence type="ECO:0000255" key="3"/>
<evidence type="ECO:0000255" key="4">
    <source>
        <dbReference type="PROSITE-ProRule" id="PRU00188"/>
    </source>
</evidence>
<evidence type="ECO:0000256" key="5">
    <source>
        <dbReference type="SAM" id="MobiDB-lite"/>
    </source>
</evidence>
<evidence type="ECO:0000305" key="6"/>